<keyword id="KW-0012">Acyltransferase</keyword>
<keyword id="KW-0963">Cytoplasm</keyword>
<keyword id="KW-0276">Fatty acid metabolism</keyword>
<keyword id="KW-0442">Lipid degradation</keyword>
<keyword id="KW-0443">Lipid metabolism</keyword>
<keyword id="KW-1185">Reference proteome</keyword>
<keyword id="KW-0808">Transferase</keyword>
<proteinExistence type="inferred from homology"/>
<organism>
    <name type="scientific">Alcanivorax borkumensis (strain ATCC 700651 / DSM 11573 / NCIMB 13689 / SK2)</name>
    <dbReference type="NCBI Taxonomy" id="393595"/>
    <lineage>
        <taxon>Bacteria</taxon>
        <taxon>Pseudomonadati</taxon>
        <taxon>Pseudomonadota</taxon>
        <taxon>Gammaproteobacteria</taxon>
        <taxon>Oceanospirillales</taxon>
        <taxon>Alcanivoracaceae</taxon>
        <taxon>Alcanivorax</taxon>
    </lineage>
</organism>
<gene>
    <name evidence="1" type="primary">fadA</name>
    <name type="ordered locus">ABO_1653</name>
</gene>
<name>FADA_ALCBS</name>
<sequence>MSLNPKDVVIVDAVRTPMGKSRNGQFRHVRAEKLSAQLIQALMARNPNWDIQLTEDVIWGCVNQTKEQGMNIARNISMLAGLPRTSAAQTVNRLCGSSMQALHSASQSIMTGNGDVFVIGGVEHMGHVAMDHGIDLNPEMSKVTAKASNMMGLTAEMLGKMHGITREQQDAFGVRSHKLAWEATQQGRWDNEIVPIEGHDQNGHKVLCEIDEVIRPGASIEDMQKLRPVFDPANGTVTAGTSSALSDGASAMLVMSAERAQALGLKPRAKIRSMAVAGCDAAIMGYGPVPATQKALARAGLTIDDIDYVELNEAFAAQSLPVAKDLKLLDKMEEKVNLNGGAIALGHPLGCSGARITGTLLNVMEWKDGQIGLATMCIGLGQGIATIIERV</sequence>
<dbReference type="EC" id="2.3.1.16" evidence="1"/>
<dbReference type="EMBL" id="AM286690">
    <property type="protein sequence ID" value="CAL17101.1"/>
    <property type="molecule type" value="Genomic_DNA"/>
</dbReference>
<dbReference type="RefSeq" id="WP_011588934.1">
    <property type="nucleotide sequence ID" value="NC_008260.1"/>
</dbReference>
<dbReference type="SMR" id="Q0VNZ7"/>
<dbReference type="STRING" id="393595.ABO_1653"/>
<dbReference type="KEGG" id="abo:ABO_1653"/>
<dbReference type="eggNOG" id="COG0183">
    <property type="taxonomic scope" value="Bacteria"/>
</dbReference>
<dbReference type="HOGENOM" id="CLU_031026_2_3_6"/>
<dbReference type="OrthoDB" id="9764638at2"/>
<dbReference type="UniPathway" id="UPA00659"/>
<dbReference type="Proteomes" id="UP000008871">
    <property type="component" value="Chromosome"/>
</dbReference>
<dbReference type="GO" id="GO:0005737">
    <property type="term" value="C:cytoplasm"/>
    <property type="evidence" value="ECO:0007669"/>
    <property type="project" value="UniProtKB-SubCell"/>
</dbReference>
<dbReference type="GO" id="GO:0003988">
    <property type="term" value="F:acetyl-CoA C-acyltransferase activity"/>
    <property type="evidence" value="ECO:0007669"/>
    <property type="project" value="UniProtKB-UniRule"/>
</dbReference>
<dbReference type="GO" id="GO:0006635">
    <property type="term" value="P:fatty acid beta-oxidation"/>
    <property type="evidence" value="ECO:0007669"/>
    <property type="project" value="UniProtKB-UniRule"/>
</dbReference>
<dbReference type="GO" id="GO:0010124">
    <property type="term" value="P:phenylacetate catabolic process"/>
    <property type="evidence" value="ECO:0007669"/>
    <property type="project" value="TreeGrafter"/>
</dbReference>
<dbReference type="CDD" id="cd00751">
    <property type="entry name" value="thiolase"/>
    <property type="match status" value="1"/>
</dbReference>
<dbReference type="FunFam" id="3.40.47.10:FF:000010">
    <property type="entry name" value="Acetyl-CoA acetyltransferase (Thiolase)"/>
    <property type="match status" value="1"/>
</dbReference>
<dbReference type="Gene3D" id="3.40.47.10">
    <property type="match status" value="2"/>
</dbReference>
<dbReference type="HAMAP" id="MF_01620">
    <property type="entry name" value="FadA"/>
    <property type="match status" value="1"/>
</dbReference>
<dbReference type="InterPro" id="IPR012805">
    <property type="entry name" value="FadA"/>
</dbReference>
<dbReference type="InterPro" id="IPR002155">
    <property type="entry name" value="Thiolase"/>
</dbReference>
<dbReference type="InterPro" id="IPR016039">
    <property type="entry name" value="Thiolase-like"/>
</dbReference>
<dbReference type="InterPro" id="IPR050215">
    <property type="entry name" value="Thiolase-like_sf_Thiolase"/>
</dbReference>
<dbReference type="InterPro" id="IPR020615">
    <property type="entry name" value="Thiolase_acyl_enz_int_AS"/>
</dbReference>
<dbReference type="InterPro" id="IPR020610">
    <property type="entry name" value="Thiolase_AS"/>
</dbReference>
<dbReference type="InterPro" id="IPR020617">
    <property type="entry name" value="Thiolase_C"/>
</dbReference>
<dbReference type="InterPro" id="IPR020613">
    <property type="entry name" value="Thiolase_CS"/>
</dbReference>
<dbReference type="InterPro" id="IPR020616">
    <property type="entry name" value="Thiolase_N"/>
</dbReference>
<dbReference type="NCBIfam" id="TIGR01930">
    <property type="entry name" value="AcCoA-C-Actrans"/>
    <property type="match status" value="1"/>
</dbReference>
<dbReference type="NCBIfam" id="TIGR02445">
    <property type="entry name" value="fadA"/>
    <property type="match status" value="1"/>
</dbReference>
<dbReference type="NCBIfam" id="NF006510">
    <property type="entry name" value="PRK08947.1"/>
    <property type="match status" value="1"/>
</dbReference>
<dbReference type="PANTHER" id="PTHR43853:SF11">
    <property type="entry name" value="3-KETOACYL-COA THIOLASE FADA"/>
    <property type="match status" value="1"/>
</dbReference>
<dbReference type="PANTHER" id="PTHR43853">
    <property type="entry name" value="3-KETOACYL-COA THIOLASE, PEROXISOMAL"/>
    <property type="match status" value="1"/>
</dbReference>
<dbReference type="Pfam" id="PF02803">
    <property type="entry name" value="Thiolase_C"/>
    <property type="match status" value="1"/>
</dbReference>
<dbReference type="Pfam" id="PF00108">
    <property type="entry name" value="Thiolase_N"/>
    <property type="match status" value="1"/>
</dbReference>
<dbReference type="PIRSF" id="PIRSF000429">
    <property type="entry name" value="Ac-CoA_Ac_transf"/>
    <property type="match status" value="1"/>
</dbReference>
<dbReference type="SUPFAM" id="SSF53901">
    <property type="entry name" value="Thiolase-like"/>
    <property type="match status" value="2"/>
</dbReference>
<dbReference type="PROSITE" id="PS00098">
    <property type="entry name" value="THIOLASE_1"/>
    <property type="match status" value="1"/>
</dbReference>
<dbReference type="PROSITE" id="PS00737">
    <property type="entry name" value="THIOLASE_2"/>
    <property type="match status" value="1"/>
</dbReference>
<dbReference type="PROSITE" id="PS00099">
    <property type="entry name" value="THIOLASE_3"/>
    <property type="match status" value="1"/>
</dbReference>
<comment type="function">
    <text evidence="1">Catalyzes the final step of fatty acid oxidation in which acetyl-CoA is released and the CoA ester of a fatty acid two carbons shorter is formed.</text>
</comment>
<comment type="catalytic activity">
    <reaction evidence="1">
        <text>an acyl-CoA + acetyl-CoA = a 3-oxoacyl-CoA + CoA</text>
        <dbReference type="Rhea" id="RHEA:21564"/>
        <dbReference type="ChEBI" id="CHEBI:57287"/>
        <dbReference type="ChEBI" id="CHEBI:57288"/>
        <dbReference type="ChEBI" id="CHEBI:58342"/>
        <dbReference type="ChEBI" id="CHEBI:90726"/>
        <dbReference type="EC" id="2.3.1.16"/>
    </reaction>
</comment>
<comment type="pathway">
    <text evidence="1">Lipid metabolism; fatty acid beta-oxidation.</text>
</comment>
<comment type="subunit">
    <text evidence="1">Heterotetramer of two alpha chains (FadB) and two beta chains (FadA).</text>
</comment>
<comment type="subcellular location">
    <subcellularLocation>
        <location evidence="1">Cytoplasm</location>
    </subcellularLocation>
</comment>
<comment type="similarity">
    <text evidence="1">Belongs to the thiolase-like superfamily. Thiolase family.</text>
</comment>
<accession>Q0VNZ7</accession>
<feature type="chain" id="PRO_0000292886" description="3-ketoacyl-CoA thiolase">
    <location>
        <begin position="1"/>
        <end position="391"/>
    </location>
</feature>
<feature type="active site" description="Acyl-thioester intermediate" evidence="1">
    <location>
        <position position="95"/>
    </location>
</feature>
<feature type="active site" description="Proton acceptor" evidence="1">
    <location>
        <position position="347"/>
    </location>
</feature>
<feature type="active site" description="Proton acceptor" evidence="1">
    <location>
        <position position="377"/>
    </location>
</feature>
<evidence type="ECO:0000255" key="1">
    <source>
        <dbReference type="HAMAP-Rule" id="MF_01620"/>
    </source>
</evidence>
<reference key="1">
    <citation type="journal article" date="2006" name="Nat. Biotechnol.">
        <title>Genome sequence of the ubiquitous hydrocarbon-degrading marine bacterium Alcanivorax borkumensis.</title>
        <authorList>
            <person name="Schneiker S."/>
            <person name="Martins dos Santos V.A.P."/>
            <person name="Bartels D."/>
            <person name="Bekel T."/>
            <person name="Brecht M."/>
            <person name="Buhrmester J."/>
            <person name="Chernikova T.N."/>
            <person name="Denaro R."/>
            <person name="Ferrer M."/>
            <person name="Gertler C."/>
            <person name="Goesmann A."/>
            <person name="Golyshina O.V."/>
            <person name="Kaminski F."/>
            <person name="Khachane A.N."/>
            <person name="Lang S."/>
            <person name="Linke B."/>
            <person name="McHardy A.C."/>
            <person name="Meyer F."/>
            <person name="Nechitaylo T."/>
            <person name="Puehler A."/>
            <person name="Regenhardt D."/>
            <person name="Rupp O."/>
            <person name="Sabirova J.S."/>
            <person name="Selbitschka W."/>
            <person name="Yakimov M.M."/>
            <person name="Timmis K.N."/>
            <person name="Vorhoelter F.-J."/>
            <person name="Weidner S."/>
            <person name="Kaiser O."/>
            <person name="Golyshin P.N."/>
        </authorList>
    </citation>
    <scope>NUCLEOTIDE SEQUENCE [LARGE SCALE GENOMIC DNA]</scope>
    <source>
        <strain>ATCC 700651 / DSM 11573 / NCIMB 13689 / SK2</strain>
    </source>
</reference>
<protein>
    <recommendedName>
        <fullName evidence="1">3-ketoacyl-CoA thiolase</fullName>
        <ecNumber evidence="1">2.3.1.16</ecNumber>
    </recommendedName>
    <alternativeName>
        <fullName evidence="1">Acetyl-CoA acyltransferase</fullName>
    </alternativeName>
    <alternativeName>
        <fullName evidence="1">Beta-ketothiolase</fullName>
    </alternativeName>
    <alternativeName>
        <fullName evidence="1">Fatty acid oxidation complex subunit beta</fullName>
    </alternativeName>
</protein>